<evidence type="ECO:0000255" key="1">
    <source>
        <dbReference type="HAMAP-Rule" id="MF_00137"/>
    </source>
</evidence>
<reference key="1">
    <citation type="submission" date="2005-10" db="EMBL/GenBank/DDBJ databases">
        <title>Complete sequence of Pelobacter carbinolicus DSM 2380.</title>
        <authorList>
            <person name="Copeland A."/>
            <person name="Lucas S."/>
            <person name="Lapidus A."/>
            <person name="Barry K."/>
            <person name="Detter J.C."/>
            <person name="Glavina T."/>
            <person name="Hammon N."/>
            <person name="Israni S."/>
            <person name="Pitluck S."/>
            <person name="Chertkov O."/>
            <person name="Schmutz J."/>
            <person name="Larimer F."/>
            <person name="Land M."/>
            <person name="Kyrpides N."/>
            <person name="Ivanova N."/>
            <person name="Richardson P."/>
        </authorList>
    </citation>
    <scope>NUCLEOTIDE SEQUENCE [LARGE SCALE GENOMIC DNA]</scope>
    <source>
        <strain>DSM 2380 / NBRC 103641 / GraBd1</strain>
    </source>
</reference>
<gene>
    <name evidence="1" type="primary">purC</name>
    <name type="ordered locus">Pcar_1051</name>
</gene>
<name>PUR7_SYNC1</name>
<protein>
    <recommendedName>
        <fullName evidence="1">Phosphoribosylaminoimidazole-succinocarboxamide synthase</fullName>
        <ecNumber evidence="1">6.3.2.6</ecNumber>
    </recommendedName>
    <alternativeName>
        <fullName evidence="1">SAICAR synthetase</fullName>
    </alternativeName>
</protein>
<accession>Q3A5Q6</accession>
<organism>
    <name type="scientific">Syntrophotalea carbinolica (strain DSM 2380 / NBRC 103641 / GraBd1)</name>
    <name type="common">Pelobacter carbinolicus</name>
    <dbReference type="NCBI Taxonomy" id="338963"/>
    <lineage>
        <taxon>Bacteria</taxon>
        <taxon>Pseudomonadati</taxon>
        <taxon>Thermodesulfobacteriota</taxon>
        <taxon>Desulfuromonadia</taxon>
        <taxon>Desulfuromonadales</taxon>
        <taxon>Syntrophotaleaceae</taxon>
        <taxon>Syntrophotalea</taxon>
    </lineage>
</organism>
<dbReference type="EC" id="6.3.2.6" evidence="1"/>
<dbReference type="EMBL" id="CP000142">
    <property type="protein sequence ID" value="ABA88301.1"/>
    <property type="molecule type" value="Genomic_DNA"/>
</dbReference>
<dbReference type="RefSeq" id="WP_011340770.1">
    <property type="nucleotide sequence ID" value="NC_007498.2"/>
</dbReference>
<dbReference type="SMR" id="Q3A5Q6"/>
<dbReference type="STRING" id="338963.Pcar_1051"/>
<dbReference type="KEGG" id="pca:Pcar_1051"/>
<dbReference type="eggNOG" id="COG0152">
    <property type="taxonomic scope" value="Bacteria"/>
</dbReference>
<dbReference type="HOGENOM" id="CLU_045637_0_0_7"/>
<dbReference type="OrthoDB" id="9801549at2"/>
<dbReference type="UniPathway" id="UPA00074">
    <property type="reaction ID" value="UER00131"/>
</dbReference>
<dbReference type="Proteomes" id="UP000002534">
    <property type="component" value="Chromosome"/>
</dbReference>
<dbReference type="GO" id="GO:0005737">
    <property type="term" value="C:cytoplasm"/>
    <property type="evidence" value="ECO:0007669"/>
    <property type="project" value="TreeGrafter"/>
</dbReference>
<dbReference type="GO" id="GO:0005524">
    <property type="term" value="F:ATP binding"/>
    <property type="evidence" value="ECO:0007669"/>
    <property type="project" value="UniProtKB-KW"/>
</dbReference>
<dbReference type="GO" id="GO:0004639">
    <property type="term" value="F:phosphoribosylaminoimidazolesuccinocarboxamide synthase activity"/>
    <property type="evidence" value="ECO:0007669"/>
    <property type="project" value="UniProtKB-UniRule"/>
</dbReference>
<dbReference type="GO" id="GO:0006189">
    <property type="term" value="P:'de novo' IMP biosynthetic process"/>
    <property type="evidence" value="ECO:0007669"/>
    <property type="project" value="UniProtKB-UniRule"/>
</dbReference>
<dbReference type="CDD" id="cd01414">
    <property type="entry name" value="SAICAR_synt_Sc"/>
    <property type="match status" value="1"/>
</dbReference>
<dbReference type="FunFam" id="3.30.470.20:FF:000015">
    <property type="entry name" value="Phosphoribosylaminoimidazole-succinocarboxamide synthase"/>
    <property type="match status" value="1"/>
</dbReference>
<dbReference type="Gene3D" id="3.30.470.20">
    <property type="entry name" value="ATP-grasp fold, B domain"/>
    <property type="match status" value="1"/>
</dbReference>
<dbReference type="Gene3D" id="3.30.200.20">
    <property type="entry name" value="Phosphorylase Kinase, domain 1"/>
    <property type="match status" value="1"/>
</dbReference>
<dbReference type="HAMAP" id="MF_00137">
    <property type="entry name" value="SAICAR_synth"/>
    <property type="match status" value="1"/>
</dbReference>
<dbReference type="InterPro" id="IPR028923">
    <property type="entry name" value="SAICAR_synt/ADE2_N"/>
</dbReference>
<dbReference type="InterPro" id="IPR001636">
    <property type="entry name" value="SAICAR_synth"/>
</dbReference>
<dbReference type="InterPro" id="IPR018236">
    <property type="entry name" value="SAICAR_synthetase_CS"/>
</dbReference>
<dbReference type="NCBIfam" id="NF010568">
    <property type="entry name" value="PRK13961.1"/>
    <property type="match status" value="1"/>
</dbReference>
<dbReference type="NCBIfam" id="TIGR00081">
    <property type="entry name" value="purC"/>
    <property type="match status" value="1"/>
</dbReference>
<dbReference type="PANTHER" id="PTHR43700">
    <property type="entry name" value="PHOSPHORIBOSYLAMINOIMIDAZOLE-SUCCINOCARBOXAMIDE SYNTHASE"/>
    <property type="match status" value="1"/>
</dbReference>
<dbReference type="PANTHER" id="PTHR43700:SF1">
    <property type="entry name" value="PHOSPHORIBOSYLAMINOIMIDAZOLE-SUCCINOCARBOXAMIDE SYNTHASE"/>
    <property type="match status" value="1"/>
</dbReference>
<dbReference type="Pfam" id="PF01259">
    <property type="entry name" value="SAICAR_synt"/>
    <property type="match status" value="1"/>
</dbReference>
<dbReference type="SUPFAM" id="SSF56104">
    <property type="entry name" value="SAICAR synthase-like"/>
    <property type="match status" value="1"/>
</dbReference>
<dbReference type="PROSITE" id="PS01057">
    <property type="entry name" value="SAICAR_SYNTHETASE_1"/>
    <property type="match status" value="1"/>
</dbReference>
<proteinExistence type="inferred from homology"/>
<sequence>MIPIVLQTDFPNLKLVNKGKVRDIYDLGEHLLIVTSDRISAFDVVMNEGIPYKGFVLTQISKFWFDAFSDIVPHHLVSTEVDDFPAETRPYRDQLEGRSMLVRKAEPLPIECIVRGYLAGSGWKEYRQQGTVCGIALPPGMVESQKLPEPIFTPSTKAELGAHDENISFEKATELCGGDIAAQAREVALTIYGRARDEMAAKGIIVADTKFEFGLRDGRLMWIDEALTPDSSRFWPQDEYRQGGAQPSFDKQFLRDYLETLDWNKQAPAPTLPDDIVLKTSEKYLEALFRITGLKP</sequence>
<keyword id="KW-0067">ATP-binding</keyword>
<keyword id="KW-0436">Ligase</keyword>
<keyword id="KW-0547">Nucleotide-binding</keyword>
<keyword id="KW-0658">Purine biosynthesis</keyword>
<keyword id="KW-1185">Reference proteome</keyword>
<feature type="chain" id="PRO_1000018747" description="Phosphoribosylaminoimidazole-succinocarboxamide synthase">
    <location>
        <begin position="1"/>
        <end position="296"/>
    </location>
</feature>
<comment type="catalytic activity">
    <reaction evidence="1">
        <text>5-amino-1-(5-phospho-D-ribosyl)imidazole-4-carboxylate + L-aspartate + ATP = (2S)-2-[5-amino-1-(5-phospho-beta-D-ribosyl)imidazole-4-carboxamido]succinate + ADP + phosphate + 2 H(+)</text>
        <dbReference type="Rhea" id="RHEA:22628"/>
        <dbReference type="ChEBI" id="CHEBI:15378"/>
        <dbReference type="ChEBI" id="CHEBI:29991"/>
        <dbReference type="ChEBI" id="CHEBI:30616"/>
        <dbReference type="ChEBI" id="CHEBI:43474"/>
        <dbReference type="ChEBI" id="CHEBI:58443"/>
        <dbReference type="ChEBI" id="CHEBI:77657"/>
        <dbReference type="ChEBI" id="CHEBI:456216"/>
        <dbReference type="EC" id="6.3.2.6"/>
    </reaction>
</comment>
<comment type="pathway">
    <text evidence="1">Purine metabolism; IMP biosynthesis via de novo pathway; 5-amino-1-(5-phospho-D-ribosyl)imidazole-4-carboxamide from 5-amino-1-(5-phospho-D-ribosyl)imidazole-4-carboxylate: step 1/2.</text>
</comment>
<comment type="similarity">
    <text evidence="1">Belongs to the SAICAR synthetase family.</text>
</comment>